<name>CH60_FRATN</name>
<organism>
    <name type="scientific">Francisella tularensis subsp. novicida (strain U112)</name>
    <dbReference type="NCBI Taxonomy" id="401614"/>
    <lineage>
        <taxon>Bacteria</taxon>
        <taxon>Pseudomonadati</taxon>
        <taxon>Pseudomonadota</taxon>
        <taxon>Gammaproteobacteria</taxon>
        <taxon>Thiotrichales</taxon>
        <taxon>Francisellaceae</taxon>
        <taxon>Francisella</taxon>
    </lineage>
</organism>
<dbReference type="EC" id="5.6.1.7" evidence="1"/>
<dbReference type="EMBL" id="CP000439">
    <property type="protein sequence ID" value="ABK90403.1"/>
    <property type="molecule type" value="Genomic_DNA"/>
</dbReference>
<dbReference type="RefSeq" id="WP_003034978.1">
    <property type="nucleotide sequence ID" value="NZ_CP009633.1"/>
</dbReference>
<dbReference type="SMR" id="A0Q838"/>
<dbReference type="KEGG" id="ftn:FTN_1538"/>
<dbReference type="KEGG" id="ftx:AW25_461"/>
<dbReference type="BioCyc" id="FTUL401614:G1G75-1589-MONOMER"/>
<dbReference type="Proteomes" id="UP000000762">
    <property type="component" value="Chromosome"/>
</dbReference>
<dbReference type="GO" id="GO:0005737">
    <property type="term" value="C:cytoplasm"/>
    <property type="evidence" value="ECO:0007669"/>
    <property type="project" value="UniProtKB-SubCell"/>
</dbReference>
<dbReference type="GO" id="GO:0005524">
    <property type="term" value="F:ATP binding"/>
    <property type="evidence" value="ECO:0007669"/>
    <property type="project" value="UniProtKB-UniRule"/>
</dbReference>
<dbReference type="GO" id="GO:0140662">
    <property type="term" value="F:ATP-dependent protein folding chaperone"/>
    <property type="evidence" value="ECO:0007669"/>
    <property type="project" value="InterPro"/>
</dbReference>
<dbReference type="GO" id="GO:0016853">
    <property type="term" value="F:isomerase activity"/>
    <property type="evidence" value="ECO:0007669"/>
    <property type="project" value="UniProtKB-KW"/>
</dbReference>
<dbReference type="GO" id="GO:0051082">
    <property type="term" value="F:unfolded protein binding"/>
    <property type="evidence" value="ECO:0007669"/>
    <property type="project" value="UniProtKB-UniRule"/>
</dbReference>
<dbReference type="GO" id="GO:0042026">
    <property type="term" value="P:protein refolding"/>
    <property type="evidence" value="ECO:0007669"/>
    <property type="project" value="UniProtKB-UniRule"/>
</dbReference>
<dbReference type="CDD" id="cd03344">
    <property type="entry name" value="GroEL"/>
    <property type="match status" value="1"/>
</dbReference>
<dbReference type="FunFam" id="1.10.560.10:FF:000001">
    <property type="entry name" value="60 kDa chaperonin"/>
    <property type="match status" value="1"/>
</dbReference>
<dbReference type="FunFam" id="3.50.7.10:FF:000001">
    <property type="entry name" value="60 kDa chaperonin"/>
    <property type="match status" value="1"/>
</dbReference>
<dbReference type="Gene3D" id="3.50.7.10">
    <property type="entry name" value="GroEL"/>
    <property type="match status" value="1"/>
</dbReference>
<dbReference type="Gene3D" id="1.10.560.10">
    <property type="entry name" value="GroEL-like equatorial domain"/>
    <property type="match status" value="1"/>
</dbReference>
<dbReference type="Gene3D" id="3.30.260.10">
    <property type="entry name" value="TCP-1-like chaperonin intermediate domain"/>
    <property type="match status" value="1"/>
</dbReference>
<dbReference type="HAMAP" id="MF_00600">
    <property type="entry name" value="CH60"/>
    <property type="match status" value="1"/>
</dbReference>
<dbReference type="InterPro" id="IPR018370">
    <property type="entry name" value="Chaperonin_Cpn60_CS"/>
</dbReference>
<dbReference type="InterPro" id="IPR001844">
    <property type="entry name" value="Cpn60/GroEL"/>
</dbReference>
<dbReference type="InterPro" id="IPR002423">
    <property type="entry name" value="Cpn60/GroEL/TCP-1"/>
</dbReference>
<dbReference type="InterPro" id="IPR027409">
    <property type="entry name" value="GroEL-like_apical_dom_sf"/>
</dbReference>
<dbReference type="InterPro" id="IPR027413">
    <property type="entry name" value="GROEL-like_equatorial_sf"/>
</dbReference>
<dbReference type="InterPro" id="IPR027410">
    <property type="entry name" value="TCP-1-like_intermed_sf"/>
</dbReference>
<dbReference type="NCBIfam" id="TIGR02348">
    <property type="entry name" value="GroEL"/>
    <property type="match status" value="1"/>
</dbReference>
<dbReference type="NCBIfam" id="NF000592">
    <property type="entry name" value="PRK00013.1"/>
    <property type="match status" value="1"/>
</dbReference>
<dbReference type="NCBIfam" id="NF009487">
    <property type="entry name" value="PRK12849.1"/>
    <property type="match status" value="1"/>
</dbReference>
<dbReference type="NCBIfam" id="NF009488">
    <property type="entry name" value="PRK12850.1"/>
    <property type="match status" value="1"/>
</dbReference>
<dbReference type="NCBIfam" id="NF009489">
    <property type="entry name" value="PRK12851.1"/>
    <property type="match status" value="1"/>
</dbReference>
<dbReference type="PANTHER" id="PTHR45633">
    <property type="entry name" value="60 KDA HEAT SHOCK PROTEIN, MITOCHONDRIAL"/>
    <property type="match status" value="1"/>
</dbReference>
<dbReference type="Pfam" id="PF00118">
    <property type="entry name" value="Cpn60_TCP1"/>
    <property type="match status" value="1"/>
</dbReference>
<dbReference type="PRINTS" id="PR00298">
    <property type="entry name" value="CHAPERONIN60"/>
</dbReference>
<dbReference type="SUPFAM" id="SSF52029">
    <property type="entry name" value="GroEL apical domain-like"/>
    <property type="match status" value="1"/>
</dbReference>
<dbReference type="SUPFAM" id="SSF48592">
    <property type="entry name" value="GroEL equatorial domain-like"/>
    <property type="match status" value="1"/>
</dbReference>
<dbReference type="SUPFAM" id="SSF54849">
    <property type="entry name" value="GroEL-intermediate domain like"/>
    <property type="match status" value="1"/>
</dbReference>
<dbReference type="PROSITE" id="PS00296">
    <property type="entry name" value="CHAPERONINS_CPN60"/>
    <property type="match status" value="1"/>
</dbReference>
<proteinExistence type="inferred from homology"/>
<feature type="chain" id="PRO_1000025782" description="Chaperonin GroEL">
    <location>
        <begin position="1"/>
        <end position="544"/>
    </location>
</feature>
<feature type="binding site" evidence="1">
    <location>
        <begin position="30"/>
        <end position="33"/>
    </location>
    <ligand>
        <name>ATP</name>
        <dbReference type="ChEBI" id="CHEBI:30616"/>
    </ligand>
</feature>
<feature type="binding site" evidence="1">
    <location>
        <position position="51"/>
    </location>
    <ligand>
        <name>ATP</name>
        <dbReference type="ChEBI" id="CHEBI:30616"/>
    </ligand>
</feature>
<feature type="binding site" evidence="1">
    <location>
        <begin position="87"/>
        <end position="91"/>
    </location>
    <ligand>
        <name>ATP</name>
        <dbReference type="ChEBI" id="CHEBI:30616"/>
    </ligand>
</feature>
<feature type="binding site" evidence="1">
    <location>
        <position position="415"/>
    </location>
    <ligand>
        <name>ATP</name>
        <dbReference type="ChEBI" id="CHEBI:30616"/>
    </ligand>
</feature>
<feature type="binding site" evidence="1">
    <location>
        <begin position="479"/>
        <end position="481"/>
    </location>
    <ligand>
        <name>ATP</name>
        <dbReference type="ChEBI" id="CHEBI:30616"/>
    </ligand>
</feature>
<feature type="binding site" evidence="1">
    <location>
        <position position="495"/>
    </location>
    <ligand>
        <name>ATP</name>
        <dbReference type="ChEBI" id="CHEBI:30616"/>
    </ligand>
</feature>
<protein>
    <recommendedName>
        <fullName evidence="1">Chaperonin GroEL</fullName>
        <ecNumber evidence="1">5.6.1.7</ecNumber>
    </recommendedName>
    <alternativeName>
        <fullName evidence="1">60 kDa chaperonin</fullName>
    </alternativeName>
    <alternativeName>
        <fullName evidence="1">Chaperonin-60</fullName>
        <shortName evidence="1">Cpn60</shortName>
    </alternativeName>
</protein>
<sequence>MAAKQVLFSDEARAKMLDGVNTLANAVKVTLGPKGRNVVLDKSFGAPTITKDGVSVAKEIELEDKFENMGAQIVKEVASKTADVAGDGTTTATVLAQALLTEGLKAVAAGMNPMDLKRGIDKATAKLVEELKALSKPCSDPKSIEQVGTISANSDATVGKLIADAMAKVGKEGVITVEEGKGFEDELDVVEGMQFDRGYLSPYFATNQENMTTDLENPYILIVDKKISNIRDLLPVLEGVSKSGRALLIIAEDVESEALATLVVNNMRGVVKVCAVKAPGFGDRRKAMLEDIATLTGATFVSEDLSMKLEETNMEHLGTASRVQVTKDNTTIIDGAGEKEAIAKRINVIKANIAEANSDYDREKLQERLAKLSGGVAVIKVGAVTEAEMKEKKDRVDDALHATRAAVEEGIVAGGGVALIRAQKALDGLTGENDDQNHGIALLRKAIEAPLRQIVSNAGGESSVVVNQVKANQGNYGYNAANDTYGDMVEMGILDPTKVTRSALQHAASIAGLMITTEAMVGEIKEAAPAMPMGGGMGGMPGMM</sequence>
<accession>A0Q838</accession>
<gene>
    <name evidence="1" type="primary">groEL</name>
    <name evidence="1" type="synonym">groL</name>
    <name type="ordered locus">FTN_1538</name>
</gene>
<comment type="function">
    <text evidence="1">Together with its co-chaperonin GroES, plays an essential role in assisting protein folding. The GroEL-GroES system forms a nano-cage that allows encapsulation of the non-native substrate proteins and provides a physical environment optimized to promote and accelerate protein folding.</text>
</comment>
<comment type="catalytic activity">
    <reaction evidence="1">
        <text>ATP + H2O + a folded polypeptide = ADP + phosphate + an unfolded polypeptide.</text>
        <dbReference type="EC" id="5.6.1.7"/>
    </reaction>
</comment>
<comment type="subunit">
    <text evidence="1">Forms a cylinder of 14 subunits composed of two heptameric rings stacked back-to-back. Interacts with the co-chaperonin GroES.</text>
</comment>
<comment type="subcellular location">
    <subcellularLocation>
        <location evidence="1">Cytoplasm</location>
    </subcellularLocation>
</comment>
<comment type="similarity">
    <text evidence="1">Belongs to the chaperonin (HSP60) family.</text>
</comment>
<keyword id="KW-0067">ATP-binding</keyword>
<keyword id="KW-0143">Chaperone</keyword>
<keyword id="KW-0963">Cytoplasm</keyword>
<keyword id="KW-0413">Isomerase</keyword>
<keyword id="KW-0547">Nucleotide-binding</keyword>
<reference key="1">
    <citation type="journal article" date="2007" name="Genome Biol.">
        <title>Comparison of Francisella tularensis genomes reveals evolutionary events associated with the emergence of human pathogenic strains.</title>
        <authorList>
            <person name="Rohmer L."/>
            <person name="Fong C."/>
            <person name="Abmayr S."/>
            <person name="Wasnick M."/>
            <person name="Larson Freeman T.J."/>
            <person name="Radey M."/>
            <person name="Guina T."/>
            <person name="Svensson K."/>
            <person name="Hayden H.S."/>
            <person name="Jacobs M."/>
            <person name="Gallagher L.A."/>
            <person name="Manoil C."/>
            <person name="Ernst R.K."/>
            <person name="Drees B."/>
            <person name="Buckley D."/>
            <person name="Haugen E."/>
            <person name="Bovee D."/>
            <person name="Zhou Y."/>
            <person name="Chang J."/>
            <person name="Levy R."/>
            <person name="Lim R."/>
            <person name="Gillett W."/>
            <person name="Guenthener D."/>
            <person name="Kang A."/>
            <person name="Shaffer S.A."/>
            <person name="Taylor G."/>
            <person name="Chen J."/>
            <person name="Gallis B."/>
            <person name="D'Argenio D.A."/>
            <person name="Forsman M."/>
            <person name="Olson M.V."/>
            <person name="Goodlett D.R."/>
            <person name="Kaul R."/>
            <person name="Miller S.I."/>
            <person name="Brittnacher M.J."/>
        </authorList>
    </citation>
    <scope>NUCLEOTIDE SEQUENCE [LARGE SCALE GENOMIC DNA]</scope>
    <source>
        <strain>U112</strain>
    </source>
</reference>
<evidence type="ECO:0000255" key="1">
    <source>
        <dbReference type="HAMAP-Rule" id="MF_00600"/>
    </source>
</evidence>